<feature type="chain" id="PRO_0000210688" description="Uncharacterized protein MPN_499">
    <location>
        <begin position="1"/>
        <end position="163"/>
    </location>
</feature>
<reference key="1">
    <citation type="journal article" date="1996" name="Nucleic Acids Res.">
        <title>Complete sequence analysis of the genome of the bacterium Mycoplasma pneumoniae.</title>
        <authorList>
            <person name="Himmelreich R."/>
            <person name="Hilbert H."/>
            <person name="Plagens H."/>
            <person name="Pirkl E."/>
            <person name="Li B.-C."/>
            <person name="Herrmann R."/>
        </authorList>
    </citation>
    <scope>NUCLEOTIDE SEQUENCE [LARGE SCALE GENOMIC DNA]</scope>
    <source>
        <strain>ATCC 29342 / M129 / Subtype 1</strain>
    </source>
</reference>
<keyword id="KW-1185">Reference proteome</keyword>
<protein>
    <recommendedName>
        <fullName>Uncharacterized protein MPN_499</fullName>
    </recommendedName>
</protein>
<proteinExistence type="predicted"/>
<name>Y499_MYCPN</name>
<sequence>MVKMLTMDKILSKKIKVNWLGGVFWLLPNLLDLFSASKRKASVRPYQSLLELVQENFLNRYDLVHFSFNGDHDFFHFNDLQAIRSFNFTIEEEQLGAMQPDEVLLFEPVDRVTVELDQKGLSLIHSGKAFCASANYFKHWLKRVPQQDKVTLVWRKSGFELKQ</sequence>
<organism>
    <name type="scientific">Mycoplasma pneumoniae (strain ATCC 29342 / M129 / Subtype 1)</name>
    <name type="common">Mycoplasmoides pneumoniae</name>
    <dbReference type="NCBI Taxonomy" id="272634"/>
    <lineage>
        <taxon>Bacteria</taxon>
        <taxon>Bacillati</taxon>
        <taxon>Mycoplasmatota</taxon>
        <taxon>Mycoplasmoidales</taxon>
        <taxon>Mycoplasmoidaceae</taxon>
        <taxon>Mycoplasmoides</taxon>
    </lineage>
</organism>
<dbReference type="EMBL" id="U00089">
    <property type="protein sequence ID" value="AAB95991.1"/>
    <property type="molecule type" value="Genomic_DNA"/>
</dbReference>
<dbReference type="PIR" id="S73670">
    <property type="entry name" value="S73670"/>
</dbReference>
<dbReference type="RefSeq" id="NP_110187.1">
    <property type="nucleotide sequence ID" value="NC_000912.1"/>
</dbReference>
<dbReference type="RefSeq" id="WP_010874855.1">
    <property type="nucleotide sequence ID" value="NZ_OU342337.1"/>
</dbReference>
<dbReference type="IntAct" id="P75288">
    <property type="interactions" value="4"/>
</dbReference>
<dbReference type="STRING" id="272634.MPN_499"/>
<dbReference type="EnsemblBacteria" id="AAB95991">
    <property type="protein sequence ID" value="AAB95991"/>
    <property type="gene ID" value="MPN_499"/>
</dbReference>
<dbReference type="KEGG" id="mpn:MPN_499"/>
<dbReference type="PATRIC" id="fig|272634.6.peg.542"/>
<dbReference type="HOGENOM" id="CLU_1641823_0_0_14"/>
<dbReference type="BioCyc" id="MPNE272634:G1GJ3-817-MONOMER"/>
<dbReference type="Proteomes" id="UP000000808">
    <property type="component" value="Chromosome"/>
</dbReference>
<dbReference type="InterPro" id="IPR054961">
    <property type="entry name" value="MPN499"/>
</dbReference>
<dbReference type="NCBIfam" id="NF045754">
    <property type="entry name" value="MPN499"/>
    <property type="match status" value="1"/>
</dbReference>
<gene>
    <name type="ordered locus">MPN_499</name>
    <name type="ORF">MP344</name>
    <name type="ORF">P02_orf163</name>
</gene>
<accession>P75288</accession>